<reference key="1">
    <citation type="journal article" date="2009" name="ISME J.">
        <title>The genome sequence of the psychrophilic archaeon, Methanococcoides burtonii: the role of genome evolution in cold adaptation.</title>
        <authorList>
            <person name="Allen M.A."/>
            <person name="Lauro F.M."/>
            <person name="Williams T.J."/>
            <person name="Burg D."/>
            <person name="Siddiqui K.S."/>
            <person name="De Francisci D."/>
            <person name="Chong K.W."/>
            <person name="Pilak O."/>
            <person name="Chew H.H."/>
            <person name="De Maere M.Z."/>
            <person name="Ting L."/>
            <person name="Katrib M."/>
            <person name="Ng C."/>
            <person name="Sowers K.R."/>
            <person name="Galperin M.Y."/>
            <person name="Anderson I.J."/>
            <person name="Ivanova N."/>
            <person name="Dalin E."/>
            <person name="Martinez M."/>
            <person name="Lapidus A."/>
            <person name="Hauser L."/>
            <person name="Land M."/>
            <person name="Thomas T."/>
            <person name="Cavicchioli R."/>
        </authorList>
    </citation>
    <scope>NUCLEOTIDE SEQUENCE [LARGE SCALE GENOMIC DNA]</scope>
    <source>
        <strain>DSM 6242 / NBRC 107633 / OCM 468 / ACE-M</strain>
    </source>
</reference>
<dbReference type="EC" id="4.3.1.32" evidence="1"/>
<dbReference type="EMBL" id="CP000300">
    <property type="protein sequence ID" value="ABE52220.1"/>
    <property type="molecule type" value="Genomic_DNA"/>
</dbReference>
<dbReference type="RefSeq" id="WP_011499365.1">
    <property type="nucleotide sequence ID" value="NC_007955.1"/>
</dbReference>
<dbReference type="SMR" id="Q12WF6"/>
<dbReference type="STRING" id="259564.Mbur_1302"/>
<dbReference type="GeneID" id="3998590"/>
<dbReference type="KEGG" id="mbu:Mbur_1302"/>
<dbReference type="HOGENOM" id="CLU_054174_0_0_2"/>
<dbReference type="OrthoDB" id="35347at2157"/>
<dbReference type="UniPathway" id="UPA00072"/>
<dbReference type="Proteomes" id="UP000001979">
    <property type="component" value="Chromosome"/>
</dbReference>
<dbReference type="GO" id="GO:0051539">
    <property type="term" value="F:4 iron, 4 sulfur cluster binding"/>
    <property type="evidence" value="ECO:0007669"/>
    <property type="project" value="UniProtKB-KW"/>
</dbReference>
<dbReference type="GO" id="GO:0044689">
    <property type="term" value="F:7,8-didemethyl-8-hydroxy-5-deazariboflavin synthase activity"/>
    <property type="evidence" value="ECO:0007669"/>
    <property type="project" value="UniProtKB-EC"/>
</dbReference>
<dbReference type="GO" id="GO:0005506">
    <property type="term" value="F:iron ion binding"/>
    <property type="evidence" value="ECO:0007669"/>
    <property type="project" value="UniProtKB-UniRule"/>
</dbReference>
<dbReference type="GO" id="GO:0016765">
    <property type="term" value="F:transferase activity, transferring alkyl or aryl (other than methyl) groups"/>
    <property type="evidence" value="ECO:0007669"/>
    <property type="project" value="InterPro"/>
</dbReference>
<dbReference type="CDD" id="cd01335">
    <property type="entry name" value="Radical_SAM"/>
    <property type="match status" value="1"/>
</dbReference>
<dbReference type="Gene3D" id="3.20.20.70">
    <property type="entry name" value="Aldolase class I"/>
    <property type="match status" value="1"/>
</dbReference>
<dbReference type="HAMAP" id="MF_01611">
    <property type="entry name" value="FO_synth_sub1"/>
    <property type="match status" value="1"/>
</dbReference>
<dbReference type="InterPro" id="IPR013785">
    <property type="entry name" value="Aldolase_TIM"/>
</dbReference>
<dbReference type="InterPro" id="IPR019939">
    <property type="entry name" value="CofG_family"/>
</dbReference>
<dbReference type="InterPro" id="IPR006638">
    <property type="entry name" value="Elp3/MiaA/NifB-like_rSAM"/>
</dbReference>
<dbReference type="InterPro" id="IPR034405">
    <property type="entry name" value="F420"/>
</dbReference>
<dbReference type="InterPro" id="IPR007197">
    <property type="entry name" value="rSAM"/>
</dbReference>
<dbReference type="NCBIfam" id="TIGR03550">
    <property type="entry name" value="F420_cofG"/>
    <property type="match status" value="1"/>
</dbReference>
<dbReference type="NCBIfam" id="NF004884">
    <property type="entry name" value="PRK06245.1"/>
    <property type="match status" value="1"/>
</dbReference>
<dbReference type="PANTHER" id="PTHR43076:SF15">
    <property type="entry name" value="7,8-DIDEMETHYL-8-HYDROXY-5-DEAZARIBOFLAVIN SYNTHASE"/>
    <property type="match status" value="1"/>
</dbReference>
<dbReference type="PANTHER" id="PTHR43076">
    <property type="entry name" value="FO SYNTHASE (COFH)"/>
    <property type="match status" value="1"/>
</dbReference>
<dbReference type="Pfam" id="PF04055">
    <property type="entry name" value="Radical_SAM"/>
    <property type="match status" value="1"/>
</dbReference>
<dbReference type="SFLD" id="SFLDF00294">
    <property type="entry name" value="7_8-didemethyl-8-hydroxy-5-dea"/>
    <property type="match status" value="1"/>
</dbReference>
<dbReference type="SFLD" id="SFLDG01388">
    <property type="entry name" value="7_8-didemethyl-8-hydroxy-5-dea"/>
    <property type="match status" value="1"/>
</dbReference>
<dbReference type="SMART" id="SM00729">
    <property type="entry name" value="Elp3"/>
    <property type="match status" value="1"/>
</dbReference>
<dbReference type="SUPFAM" id="SSF102114">
    <property type="entry name" value="Radical SAM enzymes"/>
    <property type="match status" value="1"/>
</dbReference>
<dbReference type="PROSITE" id="PS51918">
    <property type="entry name" value="RADICAL_SAM"/>
    <property type="match status" value="1"/>
</dbReference>
<organism>
    <name type="scientific">Methanococcoides burtonii (strain DSM 6242 / NBRC 107633 / OCM 468 / ACE-M)</name>
    <dbReference type="NCBI Taxonomy" id="259564"/>
    <lineage>
        <taxon>Archaea</taxon>
        <taxon>Methanobacteriati</taxon>
        <taxon>Methanobacteriota</taxon>
        <taxon>Stenosarchaea group</taxon>
        <taxon>Methanomicrobia</taxon>
        <taxon>Methanosarcinales</taxon>
        <taxon>Methanosarcinaceae</taxon>
        <taxon>Methanococcoides</taxon>
    </lineage>
</organism>
<accession>Q12WF6</accession>
<comment type="function">
    <text evidence="1">Catalyzes the radical-mediated synthesis of 7,8-didemethyl-8-hydroxy-5-deazariboflavin from 5-amino-5-(4-hydroxybenzyl)-6-(D-ribitylimino)-5,6-dihydrouracil.</text>
</comment>
<comment type="catalytic activity">
    <reaction evidence="1">
        <text>5-amino-5-(4-hydroxybenzyl)-6-(D-ribitylimino)-5,6-dihydrouracil + S-adenosyl-L-methionine = 7,8-didemethyl-8-hydroxy-5-deazariboflavin + 5'-deoxyadenosine + L-methionine + NH4(+) + H(+)</text>
        <dbReference type="Rhea" id="RHEA:55204"/>
        <dbReference type="ChEBI" id="CHEBI:15378"/>
        <dbReference type="ChEBI" id="CHEBI:17319"/>
        <dbReference type="ChEBI" id="CHEBI:28938"/>
        <dbReference type="ChEBI" id="CHEBI:57844"/>
        <dbReference type="ChEBI" id="CHEBI:59789"/>
        <dbReference type="ChEBI" id="CHEBI:59904"/>
        <dbReference type="ChEBI" id="CHEBI:85936"/>
        <dbReference type="EC" id="4.3.1.32"/>
    </reaction>
</comment>
<comment type="cofactor">
    <cofactor evidence="1">
        <name>[4Fe-4S] cluster</name>
        <dbReference type="ChEBI" id="CHEBI:49883"/>
    </cofactor>
    <text evidence="1">Binds 1 [4Fe-4S] cluster. The cluster is coordinated with 3 cysteines and an exchangeable S-adenosyl-L-methionine.</text>
</comment>
<comment type="pathway">
    <text evidence="1">Cofactor biosynthesis; coenzyme F0 biosynthesis.</text>
</comment>
<comment type="subunit">
    <text evidence="1">Consists of two subunits, CofG and CofH.</text>
</comment>
<comment type="similarity">
    <text evidence="1">Belongs to the radical SAM superfamily. CofG family.</text>
</comment>
<keyword id="KW-0004">4Fe-4S</keyword>
<keyword id="KW-0408">Iron</keyword>
<keyword id="KW-0411">Iron-sulfur</keyword>
<keyword id="KW-0456">Lyase</keyword>
<keyword id="KW-0479">Metal-binding</keyword>
<keyword id="KW-0949">S-adenosyl-L-methionine</keyword>
<proteinExistence type="inferred from homology"/>
<gene>
    <name evidence="1" type="primary">cofG</name>
    <name type="ordered locus">Mbur_1302</name>
</gene>
<sequence length="330" mass="37140">MPEFVTFSRNVFIPVTNICRNLCGYCTFRRDAGHPEAHLMSMSEIRPILERGEKAGCTEALFVFGEYAEEVPEYLLELEKLGYSTTVEYVADLCKLAIEIGLLPHTNAGILNRKELEILKPLNISMGLMLETTAELKAHSESPGKKPSTRIEMIRTAGKLKIPFTTGILVGIGETKDDRKRSLNTIADIHKEFGHIQEVIIQNFMPKPDTPMADHAPPSKEEMIDTVAIAREILPSDVAVQVAPNLIDPYSLIKAGASDLGGISPTTIDWINPEAEWPDVIELQKMIKEIELRERLPIYPQHIKKGWYSNNLSYLIETLTDKNGFKRKQR</sequence>
<evidence type="ECO:0000255" key="1">
    <source>
        <dbReference type="HAMAP-Rule" id="MF_01611"/>
    </source>
</evidence>
<evidence type="ECO:0000255" key="2">
    <source>
        <dbReference type="PROSITE-ProRule" id="PRU01266"/>
    </source>
</evidence>
<name>COFG_METBU</name>
<protein>
    <recommendedName>
        <fullName evidence="1">7,8-didemethyl-8-hydroxy-5-deazariboflavin synthase</fullName>
        <ecNumber evidence="1">4.3.1.32</ecNumber>
    </recommendedName>
    <alternativeName>
        <fullName evidence="1">FO synthase subunit 1</fullName>
    </alternativeName>
</protein>
<feature type="chain" id="PRO_0000291712" description="7,8-didemethyl-8-hydroxy-5-deazariboflavin synthase">
    <location>
        <begin position="1"/>
        <end position="330"/>
    </location>
</feature>
<feature type="domain" description="Radical SAM core" evidence="2">
    <location>
        <begin position="5"/>
        <end position="245"/>
    </location>
</feature>
<feature type="binding site" evidence="1">
    <location>
        <position position="19"/>
    </location>
    <ligand>
        <name>[4Fe-4S] cluster</name>
        <dbReference type="ChEBI" id="CHEBI:49883"/>
        <note>4Fe-4S-S-AdoMet</note>
    </ligand>
</feature>
<feature type="binding site" evidence="1">
    <location>
        <position position="23"/>
    </location>
    <ligand>
        <name>[4Fe-4S] cluster</name>
        <dbReference type="ChEBI" id="CHEBI:49883"/>
        <note>4Fe-4S-S-AdoMet</note>
    </ligand>
</feature>
<feature type="binding site" evidence="1">
    <location>
        <position position="26"/>
    </location>
    <ligand>
        <name>[4Fe-4S] cluster</name>
        <dbReference type="ChEBI" id="CHEBI:49883"/>
        <note>4Fe-4S-S-AdoMet</note>
    </ligand>
</feature>